<organism>
    <name type="scientific">Cricetulus longicaudatus</name>
    <name type="common">Long-tailed dwarf hamster</name>
    <dbReference type="NCBI Taxonomy" id="10030"/>
    <lineage>
        <taxon>Eukaryota</taxon>
        <taxon>Metazoa</taxon>
        <taxon>Chordata</taxon>
        <taxon>Craniata</taxon>
        <taxon>Vertebrata</taxon>
        <taxon>Euteleostomi</taxon>
        <taxon>Mammalia</taxon>
        <taxon>Eutheria</taxon>
        <taxon>Euarchontoglires</taxon>
        <taxon>Glires</taxon>
        <taxon>Rodentia</taxon>
        <taxon>Myomorpha</taxon>
        <taxon>Muroidea</taxon>
        <taxon>Cricetidae</taxon>
        <taxon>Cricetinae</taxon>
        <taxon>Cricetulus</taxon>
    </lineage>
</organism>
<proteinExistence type="evidence at protein level"/>
<accession>O08889</accession>
<protein>
    <recommendedName>
        <fullName evidence="4">Heparan sulfate 2-O-sulfotransferase 1</fullName>
        <ecNumber evidence="7 8">2.8.2.-</ecNumber>
    </recommendedName>
    <alternativeName>
        <fullName evidence="5">2-O-sulfotransferase</fullName>
        <shortName evidence="5">2-OST</shortName>
        <shortName evidence="3">2OST</shortName>
    </alternativeName>
    <alternativeName>
        <fullName evidence="5">HS 2-O-sulfotransferase</fullName>
    </alternativeName>
    <alternativeName>
        <fullName evidence="5">Heparan sulfate 2-sulfotransferase</fullName>
    </alternativeName>
</protein>
<keyword id="KW-0175">Coiled coil</keyword>
<keyword id="KW-0903">Direct protein sequencing</keyword>
<keyword id="KW-1015">Disulfide bond</keyword>
<keyword id="KW-0325">Glycoprotein</keyword>
<keyword id="KW-0333">Golgi apparatus</keyword>
<keyword id="KW-0472">Membrane</keyword>
<keyword id="KW-0735">Signal-anchor</keyword>
<keyword id="KW-0808">Transferase</keyword>
<keyword id="KW-0812">Transmembrane</keyword>
<keyword id="KW-1133">Transmembrane helix</keyword>
<name>HS2ST_CRILO</name>
<sequence>MGLLRIMMPPKLQLLAVVAFAVAMLFLENQIQKLEESRAKLERAIARHEVREIEQRHTMDGPRQDAAVDEEEDIVIIYNRVPKTASTSFTNIAYDLCAKNRYHVLHINTTKNNPVMSLQDQVRFVKNITTWNEMKPGFYHGHISYLDFAKFGVKKKPIYINVIRDPIERLVSYYYFLRFGDDYRPGLRRRKQGDKKTFDECVAEGGSDCAPEKLWLQIPFFCGHSSECWNVGSRWAMDQAKYNLINEYFLVGVTEELEDFIMLLEAALPRFFRGATDLYRTGKKSHLRKTTEKKLPTKQTIAKLQQSDIWKMENEFYEFALEQFQFIRAHAVREKDGDLYILAQNFFYEKIYPKSN</sequence>
<comment type="function">
    <text evidence="5 7 8">Catalyzes the transfer of a sulfo group from 3'-phospho-5'-adenylyl sulfate (PAPS) to the 2-OH position of iduronic acid (IdoA) or glucuronic acid (GlcA) within the heparan sulfate (HS) chain and participates in HS biosynthesis (PubMed:8631801, PubMed:9153262). Required for metanephric development of kidney formation, suggesting that 2-O-sulfation within HS is essential for signaling between ureteric bud and metanephric mesenchyme (By similarity).</text>
</comment>
<comment type="biophysicochemical properties">
    <kinetics>
        <KM evidence="7">0.2 uM for PAPS</KM>
    </kinetics>
    <phDependence>
        <text evidence="7">Optimum pH is 5.5.</text>
    </phDependence>
</comment>
<comment type="subunit">
    <text evidence="1 3 5">Homotrimer (By similarity). Interacts with the C5-epimerase GLCE (By similarity).</text>
</comment>
<comment type="subcellular location">
    <subcellularLocation>
        <location evidence="5">Golgi apparatus membrane</location>
        <topology evidence="5">Single-pass type II membrane protein</topology>
    </subcellularLocation>
</comment>
<comment type="PTM">
    <text evidence="7">N-glycosylated.</text>
</comment>
<comment type="similarity">
    <text evidence="9">Belongs to the sulfotransferase 3 family.</text>
</comment>
<dbReference type="EC" id="2.8.2.-" evidence="7 8"/>
<dbReference type="EMBL" id="D88811">
    <property type="protein sequence ID" value="BAA20422.1"/>
    <property type="molecule type" value="mRNA"/>
</dbReference>
<dbReference type="SMR" id="O08889"/>
<dbReference type="ChEMBL" id="CHEMBL4212"/>
<dbReference type="GlyCosmos" id="O08889">
    <property type="glycosylation" value="2 sites, No reported glycans"/>
</dbReference>
<dbReference type="SABIO-RK" id="O08889"/>
<dbReference type="GO" id="GO:0005794">
    <property type="term" value="C:Golgi apparatus"/>
    <property type="evidence" value="ECO:0000314"/>
    <property type="project" value="WormBase"/>
</dbReference>
<dbReference type="GO" id="GO:0000139">
    <property type="term" value="C:Golgi membrane"/>
    <property type="evidence" value="ECO:0007669"/>
    <property type="project" value="UniProtKB-SubCell"/>
</dbReference>
<dbReference type="GO" id="GO:0004394">
    <property type="term" value="F:heparan sulfate 2-sulfotransferase activity"/>
    <property type="evidence" value="ECO:0000250"/>
    <property type="project" value="UniProtKB"/>
</dbReference>
<dbReference type="FunFam" id="3.40.50.300:FF:000534">
    <property type="entry name" value="Heparan sulfate 2-O-sulfotransferase 1"/>
    <property type="match status" value="1"/>
</dbReference>
<dbReference type="Gene3D" id="3.40.50.300">
    <property type="entry name" value="P-loop containing nucleotide triphosphate hydrolases"/>
    <property type="match status" value="1"/>
</dbReference>
<dbReference type="InterPro" id="IPR007734">
    <property type="entry name" value="Heparan_SO4_2-O-STrfase"/>
</dbReference>
<dbReference type="InterPro" id="IPR027417">
    <property type="entry name" value="P-loop_NTPase"/>
</dbReference>
<dbReference type="InterPro" id="IPR005331">
    <property type="entry name" value="Sulfotransferase"/>
</dbReference>
<dbReference type="PANTHER" id="PTHR12129">
    <property type="entry name" value="HEPARAN SULFATE 2-O-SULFOTRANSFERASE"/>
    <property type="match status" value="1"/>
</dbReference>
<dbReference type="PANTHER" id="PTHR12129:SF17">
    <property type="entry name" value="HEPARAN SULFATE 2-O-SULFOTRANSFERASE 1"/>
    <property type="match status" value="1"/>
</dbReference>
<dbReference type="Pfam" id="PF03567">
    <property type="entry name" value="Sulfotransfer_2"/>
    <property type="match status" value="1"/>
</dbReference>
<dbReference type="SUPFAM" id="SSF52540">
    <property type="entry name" value="P-loop containing nucleoside triphosphate hydrolases"/>
    <property type="match status" value="1"/>
</dbReference>
<gene>
    <name evidence="4" type="primary">HS2ST1</name>
    <name type="synonym">HS2ST</name>
</gene>
<feature type="chain" id="PRO_0000207673" description="Heparan sulfate 2-O-sulfotransferase 1">
    <location>
        <begin position="1"/>
        <end position="356"/>
    </location>
</feature>
<feature type="topological domain" description="Cytoplasmic" evidence="6">
    <location>
        <begin position="1"/>
        <end position="11"/>
    </location>
</feature>
<feature type="transmembrane region" description="Helical; Signal-anchor for type II membrane protein" evidence="6">
    <location>
        <begin position="12"/>
        <end position="28"/>
    </location>
</feature>
<feature type="topological domain" description="Lumenal" evidence="6">
    <location>
        <begin position="29"/>
        <end position="356"/>
    </location>
</feature>
<feature type="coiled-coil region" evidence="6">
    <location>
        <begin position="24"/>
        <end position="51"/>
    </location>
</feature>
<feature type="active site" evidence="3">
    <location>
        <position position="140"/>
    </location>
</feature>
<feature type="active site" evidence="2">
    <location>
        <position position="142"/>
    </location>
</feature>
<feature type="binding site" evidence="3">
    <location>
        <position position="83"/>
    </location>
    <ligand>
        <name>adenosine 3',5'-bisphosphate</name>
        <dbReference type="ChEBI" id="CHEBI:58343"/>
    </ligand>
</feature>
<feature type="binding site" evidence="3">
    <location>
        <position position="84"/>
    </location>
    <ligand>
        <name>adenosine 3',5'-bisphosphate</name>
        <dbReference type="ChEBI" id="CHEBI:58343"/>
    </ligand>
</feature>
<feature type="binding site" evidence="3">
    <location>
        <position position="85"/>
    </location>
    <ligand>
        <name>adenosine 3',5'-bisphosphate</name>
        <dbReference type="ChEBI" id="CHEBI:58343"/>
    </ligand>
</feature>
<feature type="binding site" evidence="3">
    <location>
        <position position="86"/>
    </location>
    <ligand>
        <name>adenosine 3',5'-bisphosphate</name>
        <dbReference type="ChEBI" id="CHEBI:58343"/>
    </ligand>
</feature>
<feature type="binding site" evidence="3">
    <location>
        <position position="87"/>
    </location>
    <ligand>
        <name>adenosine 3',5'-bisphosphate</name>
        <dbReference type="ChEBI" id="CHEBI:58343"/>
    </ligand>
</feature>
<feature type="binding site" evidence="3">
    <location>
        <position position="88"/>
    </location>
    <ligand>
        <name>adenosine 3',5'-bisphosphate</name>
        <dbReference type="ChEBI" id="CHEBI:58343"/>
    </ligand>
</feature>
<feature type="binding site" evidence="3">
    <location>
        <position position="164"/>
    </location>
    <ligand>
        <name>adenosine 3',5'-bisphosphate</name>
        <dbReference type="ChEBI" id="CHEBI:58343"/>
    </ligand>
</feature>
<feature type="binding site" evidence="3">
    <location>
        <position position="172"/>
    </location>
    <ligand>
        <name>adenosine 3',5'-bisphosphate</name>
        <dbReference type="ChEBI" id="CHEBI:58343"/>
    </ligand>
</feature>
<feature type="binding site" evidence="3">
    <location>
        <position position="279"/>
    </location>
    <ligand>
        <name>adenosine 3',5'-bisphosphate</name>
        <dbReference type="ChEBI" id="CHEBI:58343"/>
    </ligand>
</feature>
<feature type="binding site" evidence="3">
    <location>
        <position position="285"/>
    </location>
    <ligand>
        <name>adenosine 3',5'-bisphosphate</name>
        <dbReference type="ChEBI" id="CHEBI:58343"/>
    </ligand>
</feature>
<feature type="binding site" evidence="3">
    <location>
        <position position="290"/>
    </location>
    <ligand>
        <name>adenosine 3',5'-bisphosphate</name>
        <dbReference type="ChEBI" id="CHEBI:58343"/>
    </ligand>
</feature>
<feature type="binding site" evidence="3">
    <location>
        <position position="293"/>
    </location>
    <ligand>
        <name>adenosine 3',5'-bisphosphate</name>
        <dbReference type="ChEBI" id="CHEBI:58343"/>
    </ligand>
</feature>
<feature type="glycosylation site" description="N-linked (GlcNAc...) asparagine" evidence="6">
    <location>
        <position position="108"/>
    </location>
</feature>
<feature type="glycosylation site" description="N-linked (GlcNAc...) asparagine" evidence="6">
    <location>
        <position position="127"/>
    </location>
</feature>
<feature type="disulfide bond" evidence="3">
    <location>
        <begin position="201"/>
        <end position="209"/>
    </location>
</feature>
<feature type="disulfide bond" evidence="3">
    <location>
        <begin position="222"/>
        <end position="228"/>
    </location>
</feature>
<evidence type="ECO:0000250" key="1"/>
<evidence type="ECO:0000250" key="2">
    <source>
        <dbReference type="UniProtKB" id="A0A8C2LVE3"/>
    </source>
</evidence>
<evidence type="ECO:0000250" key="3">
    <source>
        <dbReference type="UniProtKB" id="Q76KB1"/>
    </source>
</evidence>
<evidence type="ECO:0000250" key="4">
    <source>
        <dbReference type="UniProtKB" id="Q7LGA3"/>
    </source>
</evidence>
<evidence type="ECO:0000250" key="5">
    <source>
        <dbReference type="UniProtKB" id="Q8R3H7"/>
    </source>
</evidence>
<evidence type="ECO:0000255" key="6"/>
<evidence type="ECO:0000269" key="7">
    <source>
    </source>
</evidence>
<evidence type="ECO:0000269" key="8">
    <source>
    </source>
</evidence>
<evidence type="ECO:0000305" key="9"/>
<reference key="1">
    <citation type="journal article" date="1997" name="J. Biol. Chem.">
        <title>Molecular cloning and expression of Chinese hamster ovary cell heparan-sulfate 2-sulfotransferase.</title>
        <authorList>
            <person name="Kobayashi M."/>
            <person name="Habuchi H."/>
            <person name="Yoneda M."/>
            <person name="Habuchi O."/>
            <person name="Kimata K."/>
        </authorList>
    </citation>
    <scope>NUCLEOTIDE SEQUENCE [MRNA]</scope>
    <scope>PROTEIN SEQUENCE OF 73-80; 95-107; 120-128; 181-189 AND 277-280</scope>
    <scope>FUNCTION</scope>
    <scope>CATALYTIC ACTIVITY</scope>
    <source>
        <tissue>Ovary</tissue>
    </source>
</reference>
<reference key="2">
    <citation type="journal article" date="1996" name="J. Biol. Chem.">
        <title>Purification and characterization of heparan sulfate 2-sulfotransferase from cultured Chinese hamster ovary cells.</title>
        <authorList>
            <person name="Kobayashi M."/>
            <person name="Habuchi H."/>
            <person name="Habuchi O."/>
            <person name="Saito M."/>
            <person name="Kimata K."/>
        </authorList>
    </citation>
    <scope>FUNCTION</scope>
    <scope>CATALYTIC ACTIVITY</scope>
    <scope>BIOPHYSICOCHEMICAL PROPERTIES</scope>
    <scope>GLYCOSYLATION</scope>
</reference>